<sequence length="241" mass="26948">MFVDSMEEHKLWVIVPAAGVGSRMGGERPKQYLKLIDRSVLEHTLDRLLSAPGISQIYLPLHPQDKWWPEIADKYTGKVISVAGGEERSTSVLNALEKIESHAAIEDWVLVHDVARPCFRISDISNLMRLLWNTQPGGLLGVPVADTVKRTNEKGEVLATVSRANLWRAYTPQMFRFGALLSALRQGSEKGVHITDEASAIEAQGLKPVMVEGHSDNIKITHPQDLPLAEIFLRRIMQEEE</sequence>
<proteinExistence type="inferred from homology"/>
<evidence type="ECO:0000255" key="1">
    <source>
        <dbReference type="HAMAP-Rule" id="MF_00108"/>
    </source>
</evidence>
<feature type="chain" id="PRO_0000237794" description="2-C-methyl-D-erythritol 4-phosphate cytidylyltransferase">
    <location>
        <begin position="1"/>
        <end position="241"/>
    </location>
</feature>
<feature type="site" description="Transition state stabilizer" evidence="1">
    <location>
        <position position="23"/>
    </location>
</feature>
<feature type="site" description="Transition state stabilizer" evidence="1">
    <location>
        <position position="30"/>
    </location>
</feature>
<feature type="site" description="Positions MEP for the nucleophilic attack" evidence="1">
    <location>
        <position position="163"/>
    </location>
</feature>
<feature type="site" description="Positions MEP for the nucleophilic attack" evidence="1">
    <location>
        <position position="219"/>
    </location>
</feature>
<dbReference type="EC" id="2.7.7.60" evidence="1"/>
<dbReference type="EMBL" id="CP000155">
    <property type="protein sequence ID" value="ABC28707.1"/>
    <property type="molecule type" value="Genomic_DNA"/>
</dbReference>
<dbReference type="SMR" id="Q2SKW7"/>
<dbReference type="STRING" id="349521.HCH_01869"/>
<dbReference type="KEGG" id="hch:HCH_01869"/>
<dbReference type="eggNOG" id="COG1211">
    <property type="taxonomic scope" value="Bacteria"/>
</dbReference>
<dbReference type="HOGENOM" id="CLU_061281_3_1_6"/>
<dbReference type="OrthoDB" id="9806837at2"/>
<dbReference type="UniPathway" id="UPA00056">
    <property type="reaction ID" value="UER00093"/>
</dbReference>
<dbReference type="Proteomes" id="UP000000238">
    <property type="component" value="Chromosome"/>
</dbReference>
<dbReference type="GO" id="GO:0050518">
    <property type="term" value="F:2-C-methyl-D-erythritol 4-phosphate cytidylyltransferase activity"/>
    <property type="evidence" value="ECO:0007669"/>
    <property type="project" value="UniProtKB-UniRule"/>
</dbReference>
<dbReference type="GO" id="GO:0019288">
    <property type="term" value="P:isopentenyl diphosphate biosynthetic process, methylerythritol 4-phosphate pathway"/>
    <property type="evidence" value="ECO:0007669"/>
    <property type="project" value="UniProtKB-UniRule"/>
</dbReference>
<dbReference type="CDD" id="cd02516">
    <property type="entry name" value="CDP-ME_synthetase"/>
    <property type="match status" value="1"/>
</dbReference>
<dbReference type="FunFam" id="3.90.550.10:FF:000003">
    <property type="entry name" value="2-C-methyl-D-erythritol 4-phosphate cytidylyltransferase"/>
    <property type="match status" value="1"/>
</dbReference>
<dbReference type="Gene3D" id="3.90.550.10">
    <property type="entry name" value="Spore Coat Polysaccharide Biosynthesis Protein SpsA, Chain A"/>
    <property type="match status" value="1"/>
</dbReference>
<dbReference type="HAMAP" id="MF_00108">
    <property type="entry name" value="IspD"/>
    <property type="match status" value="1"/>
</dbReference>
<dbReference type="InterPro" id="IPR001228">
    <property type="entry name" value="IspD"/>
</dbReference>
<dbReference type="InterPro" id="IPR034683">
    <property type="entry name" value="IspD/TarI"/>
</dbReference>
<dbReference type="InterPro" id="IPR050088">
    <property type="entry name" value="IspD/TarI_cytidylyltransf_bact"/>
</dbReference>
<dbReference type="InterPro" id="IPR018294">
    <property type="entry name" value="ISPD_synthase_CS"/>
</dbReference>
<dbReference type="InterPro" id="IPR029044">
    <property type="entry name" value="Nucleotide-diphossugar_trans"/>
</dbReference>
<dbReference type="NCBIfam" id="TIGR00453">
    <property type="entry name" value="ispD"/>
    <property type="match status" value="1"/>
</dbReference>
<dbReference type="PANTHER" id="PTHR32125">
    <property type="entry name" value="2-C-METHYL-D-ERYTHRITOL 4-PHOSPHATE CYTIDYLYLTRANSFERASE, CHLOROPLASTIC"/>
    <property type="match status" value="1"/>
</dbReference>
<dbReference type="PANTHER" id="PTHR32125:SF4">
    <property type="entry name" value="2-C-METHYL-D-ERYTHRITOL 4-PHOSPHATE CYTIDYLYLTRANSFERASE, CHLOROPLASTIC"/>
    <property type="match status" value="1"/>
</dbReference>
<dbReference type="Pfam" id="PF01128">
    <property type="entry name" value="IspD"/>
    <property type="match status" value="1"/>
</dbReference>
<dbReference type="SUPFAM" id="SSF53448">
    <property type="entry name" value="Nucleotide-diphospho-sugar transferases"/>
    <property type="match status" value="1"/>
</dbReference>
<dbReference type="PROSITE" id="PS01295">
    <property type="entry name" value="ISPD"/>
    <property type="match status" value="1"/>
</dbReference>
<accession>Q2SKW7</accession>
<gene>
    <name evidence="1" type="primary">ispD</name>
    <name type="ordered locus">HCH_01869</name>
</gene>
<reference key="1">
    <citation type="journal article" date="2005" name="Nucleic Acids Res.">
        <title>Genomic blueprint of Hahella chejuensis, a marine microbe producing an algicidal agent.</title>
        <authorList>
            <person name="Jeong H."/>
            <person name="Yim J.H."/>
            <person name="Lee C."/>
            <person name="Choi S.-H."/>
            <person name="Park Y.K."/>
            <person name="Yoon S.H."/>
            <person name="Hur C.-G."/>
            <person name="Kang H.-Y."/>
            <person name="Kim D."/>
            <person name="Lee H.H."/>
            <person name="Park K.H."/>
            <person name="Park S.-H."/>
            <person name="Park H.-S."/>
            <person name="Lee H.K."/>
            <person name="Oh T.K."/>
            <person name="Kim J.F."/>
        </authorList>
    </citation>
    <scope>NUCLEOTIDE SEQUENCE [LARGE SCALE GENOMIC DNA]</scope>
    <source>
        <strain>KCTC 2396</strain>
    </source>
</reference>
<protein>
    <recommendedName>
        <fullName evidence="1">2-C-methyl-D-erythritol 4-phosphate cytidylyltransferase</fullName>
        <ecNumber evidence="1">2.7.7.60</ecNumber>
    </recommendedName>
    <alternativeName>
        <fullName evidence="1">4-diphosphocytidyl-2C-methyl-D-erythritol synthase</fullName>
    </alternativeName>
    <alternativeName>
        <fullName evidence="1">MEP cytidylyltransferase</fullName>
        <shortName evidence="1">MCT</shortName>
    </alternativeName>
</protein>
<organism>
    <name type="scientific">Hahella chejuensis (strain KCTC 2396)</name>
    <dbReference type="NCBI Taxonomy" id="349521"/>
    <lineage>
        <taxon>Bacteria</taxon>
        <taxon>Pseudomonadati</taxon>
        <taxon>Pseudomonadota</taxon>
        <taxon>Gammaproteobacteria</taxon>
        <taxon>Oceanospirillales</taxon>
        <taxon>Hahellaceae</taxon>
        <taxon>Hahella</taxon>
    </lineage>
</organism>
<name>ISPD_HAHCH</name>
<comment type="function">
    <text evidence="1">Catalyzes the formation of 4-diphosphocytidyl-2-C-methyl-D-erythritol from CTP and 2-C-methyl-D-erythritol 4-phosphate (MEP).</text>
</comment>
<comment type="catalytic activity">
    <reaction evidence="1">
        <text>2-C-methyl-D-erythritol 4-phosphate + CTP + H(+) = 4-CDP-2-C-methyl-D-erythritol + diphosphate</text>
        <dbReference type="Rhea" id="RHEA:13429"/>
        <dbReference type="ChEBI" id="CHEBI:15378"/>
        <dbReference type="ChEBI" id="CHEBI:33019"/>
        <dbReference type="ChEBI" id="CHEBI:37563"/>
        <dbReference type="ChEBI" id="CHEBI:57823"/>
        <dbReference type="ChEBI" id="CHEBI:58262"/>
        <dbReference type="EC" id="2.7.7.60"/>
    </reaction>
</comment>
<comment type="pathway">
    <text evidence="1">Isoprenoid biosynthesis; isopentenyl diphosphate biosynthesis via DXP pathway; isopentenyl diphosphate from 1-deoxy-D-xylulose 5-phosphate: step 2/6.</text>
</comment>
<comment type="similarity">
    <text evidence="1">Belongs to the IspD/TarI cytidylyltransferase family. IspD subfamily.</text>
</comment>
<keyword id="KW-0414">Isoprene biosynthesis</keyword>
<keyword id="KW-0548">Nucleotidyltransferase</keyword>
<keyword id="KW-1185">Reference proteome</keyword>
<keyword id="KW-0808">Transferase</keyword>